<proteinExistence type="inferred from homology"/>
<evidence type="ECO:0000250" key="1"/>
<evidence type="ECO:0000250" key="2">
    <source>
        <dbReference type="UniProtKB" id="P0A9M2"/>
    </source>
</evidence>
<evidence type="ECO:0000250" key="3">
    <source>
        <dbReference type="UniProtKB" id="P9WHQ9"/>
    </source>
</evidence>
<evidence type="ECO:0000305" key="4"/>
<gene>
    <name type="primary">hpt</name>
    <name type="ordered locus">SMU_14</name>
</gene>
<keyword id="KW-0963">Cytoplasm</keyword>
<keyword id="KW-0328">Glycosyltransferase</keyword>
<keyword id="KW-0460">Magnesium</keyword>
<keyword id="KW-0479">Metal-binding</keyword>
<keyword id="KW-0547">Nucleotide-binding</keyword>
<keyword id="KW-0660">Purine salvage</keyword>
<keyword id="KW-1185">Reference proteome</keyword>
<keyword id="KW-0808">Transferase</keyword>
<sequence length="180" mass="20542">MLEQNIKKVLYSEEEIIVKTKELGAQLTKDYAGKNPLLVGVLKGSVPFMAELMKHIDTHIEIDFMVVSSYHGGTTSSGEVKILKDVDTNIENRDVIFIEDIIDTGRTLKYLRDMFKYRQANSVRIATLFDKPEGRVVDIDADYVCYKVPNEFIVGFGLDYAENYRNLPYVGVLKEDVYSK</sequence>
<reference key="1">
    <citation type="journal article" date="2002" name="Proc. Natl. Acad. Sci. U.S.A.">
        <title>Genome sequence of Streptococcus mutans UA159, a cariogenic dental pathogen.</title>
        <authorList>
            <person name="Ajdic D.J."/>
            <person name="McShan W.M."/>
            <person name="McLaughlin R.E."/>
            <person name="Savic G."/>
            <person name="Chang J."/>
            <person name="Carson M.B."/>
            <person name="Primeaux C."/>
            <person name="Tian R."/>
            <person name="Kenton S."/>
            <person name="Jia H.G."/>
            <person name="Lin S.P."/>
            <person name="Qian Y."/>
            <person name="Li S."/>
            <person name="Zhu H."/>
            <person name="Najar F.Z."/>
            <person name="Lai H."/>
            <person name="White J."/>
            <person name="Roe B.A."/>
            <person name="Ferretti J.J."/>
        </authorList>
    </citation>
    <scope>NUCLEOTIDE SEQUENCE [LARGE SCALE GENOMIC DNA]</scope>
    <source>
        <strain>ATCC 700610 / UA159</strain>
    </source>
</reference>
<protein>
    <recommendedName>
        <fullName>Hypoxanthine-guanine phosphoribosyltransferase</fullName>
        <shortName>HGPRT</shortName>
        <shortName>HGPRTase</shortName>
        <ecNumber evidence="3">2.4.2.8</ecNumber>
    </recommendedName>
</protein>
<comment type="function">
    <text evidence="3">Purine salvage pathway enzyme that catalyzes the transfer of the ribosyl-5-phosphate group from 5-phospho-alpha-D-ribose 1-diphosphate (PRPP) to the N9 position of the 6-oxopurines hypoxanthine and guanine to form the corresponding ribonucleotides IMP (inosine 5'-monophosphate) and GMP (guanosine 5'-monophosphate), with the release of PPi.</text>
</comment>
<comment type="catalytic activity">
    <reaction evidence="3">
        <text>IMP + diphosphate = hypoxanthine + 5-phospho-alpha-D-ribose 1-diphosphate</text>
        <dbReference type="Rhea" id="RHEA:17973"/>
        <dbReference type="ChEBI" id="CHEBI:17368"/>
        <dbReference type="ChEBI" id="CHEBI:33019"/>
        <dbReference type="ChEBI" id="CHEBI:58017"/>
        <dbReference type="ChEBI" id="CHEBI:58053"/>
        <dbReference type="EC" id="2.4.2.8"/>
    </reaction>
    <physiologicalReaction direction="right-to-left" evidence="3">
        <dbReference type="Rhea" id="RHEA:17975"/>
    </physiologicalReaction>
</comment>
<comment type="catalytic activity">
    <reaction evidence="3">
        <text>GMP + diphosphate = guanine + 5-phospho-alpha-D-ribose 1-diphosphate</text>
        <dbReference type="Rhea" id="RHEA:25424"/>
        <dbReference type="ChEBI" id="CHEBI:16235"/>
        <dbReference type="ChEBI" id="CHEBI:33019"/>
        <dbReference type="ChEBI" id="CHEBI:58017"/>
        <dbReference type="ChEBI" id="CHEBI:58115"/>
        <dbReference type="EC" id="2.4.2.8"/>
    </reaction>
    <physiologicalReaction direction="right-to-left" evidence="3">
        <dbReference type="Rhea" id="RHEA:25426"/>
    </physiologicalReaction>
</comment>
<comment type="cofactor">
    <cofactor evidence="3">
        <name>Mg(2+)</name>
        <dbReference type="ChEBI" id="CHEBI:18420"/>
    </cofactor>
</comment>
<comment type="pathway">
    <text evidence="3">Purine metabolism; IMP biosynthesis via salvage pathway; IMP from hypoxanthine: step 1/1.</text>
</comment>
<comment type="pathway">
    <text evidence="3">Purine metabolism; GMP biosynthesis via salvage pathway; GMP from guanine: step 1/1.</text>
</comment>
<comment type="subcellular location">
    <subcellularLocation>
        <location evidence="1">Cytoplasm</location>
    </subcellularLocation>
</comment>
<comment type="similarity">
    <text evidence="4">Belongs to the purine/pyrimidine phosphoribosyltransferase family.</text>
</comment>
<dbReference type="EC" id="2.4.2.8" evidence="3"/>
<dbReference type="EMBL" id="AE014133">
    <property type="protein sequence ID" value="AAN57805.1"/>
    <property type="molecule type" value="Genomic_DNA"/>
</dbReference>
<dbReference type="RefSeq" id="NP_720499.1">
    <property type="nucleotide sequence ID" value="NC_004350.2"/>
</dbReference>
<dbReference type="RefSeq" id="WP_002262637.1">
    <property type="nucleotide sequence ID" value="NC_004350.2"/>
</dbReference>
<dbReference type="SMR" id="Q8DWM8"/>
<dbReference type="STRING" id="210007.SMU_14"/>
<dbReference type="GeneID" id="93860384"/>
<dbReference type="KEGG" id="smu:SMU_14"/>
<dbReference type="PATRIC" id="fig|210007.7.peg.12"/>
<dbReference type="eggNOG" id="COG0634">
    <property type="taxonomic scope" value="Bacteria"/>
</dbReference>
<dbReference type="HOGENOM" id="CLU_073615_0_0_9"/>
<dbReference type="OrthoDB" id="9802824at2"/>
<dbReference type="PhylomeDB" id="Q8DWM8"/>
<dbReference type="UniPathway" id="UPA00591">
    <property type="reaction ID" value="UER00648"/>
</dbReference>
<dbReference type="UniPathway" id="UPA00909">
    <property type="reaction ID" value="UER00887"/>
</dbReference>
<dbReference type="Proteomes" id="UP000002512">
    <property type="component" value="Chromosome"/>
</dbReference>
<dbReference type="GO" id="GO:0005829">
    <property type="term" value="C:cytosol"/>
    <property type="evidence" value="ECO:0007669"/>
    <property type="project" value="TreeGrafter"/>
</dbReference>
<dbReference type="GO" id="GO:0052657">
    <property type="term" value="F:guanine phosphoribosyltransferase activity"/>
    <property type="evidence" value="ECO:0007669"/>
    <property type="project" value="RHEA"/>
</dbReference>
<dbReference type="GO" id="GO:0004422">
    <property type="term" value="F:hypoxanthine phosphoribosyltransferase activity"/>
    <property type="evidence" value="ECO:0007669"/>
    <property type="project" value="InterPro"/>
</dbReference>
<dbReference type="GO" id="GO:0000287">
    <property type="term" value="F:magnesium ion binding"/>
    <property type="evidence" value="ECO:0007669"/>
    <property type="project" value="TreeGrafter"/>
</dbReference>
<dbReference type="GO" id="GO:0000166">
    <property type="term" value="F:nucleotide binding"/>
    <property type="evidence" value="ECO:0007669"/>
    <property type="project" value="UniProtKB-KW"/>
</dbReference>
<dbReference type="GO" id="GO:0032263">
    <property type="term" value="P:GMP salvage"/>
    <property type="evidence" value="ECO:0007669"/>
    <property type="project" value="UniProtKB-UniPathway"/>
</dbReference>
<dbReference type="GO" id="GO:0006178">
    <property type="term" value="P:guanine salvage"/>
    <property type="evidence" value="ECO:0007669"/>
    <property type="project" value="TreeGrafter"/>
</dbReference>
<dbReference type="GO" id="GO:0046100">
    <property type="term" value="P:hypoxanthine metabolic process"/>
    <property type="evidence" value="ECO:0007669"/>
    <property type="project" value="TreeGrafter"/>
</dbReference>
<dbReference type="GO" id="GO:0032264">
    <property type="term" value="P:IMP salvage"/>
    <property type="evidence" value="ECO:0007669"/>
    <property type="project" value="UniProtKB-UniPathway"/>
</dbReference>
<dbReference type="GO" id="GO:0006166">
    <property type="term" value="P:purine ribonucleoside salvage"/>
    <property type="evidence" value="ECO:0007669"/>
    <property type="project" value="UniProtKB-KW"/>
</dbReference>
<dbReference type="CDD" id="cd06223">
    <property type="entry name" value="PRTases_typeI"/>
    <property type="match status" value="1"/>
</dbReference>
<dbReference type="FunFam" id="3.40.50.2020:FF:000006">
    <property type="entry name" value="Hypoxanthine phosphoribosyltransferase"/>
    <property type="match status" value="1"/>
</dbReference>
<dbReference type="Gene3D" id="3.40.50.2020">
    <property type="match status" value="1"/>
</dbReference>
<dbReference type="InterPro" id="IPR050408">
    <property type="entry name" value="HGPRT"/>
</dbReference>
<dbReference type="InterPro" id="IPR005904">
    <property type="entry name" value="Hxn_phspho_trans"/>
</dbReference>
<dbReference type="InterPro" id="IPR000836">
    <property type="entry name" value="PRibTrfase_dom"/>
</dbReference>
<dbReference type="InterPro" id="IPR029057">
    <property type="entry name" value="PRTase-like"/>
</dbReference>
<dbReference type="NCBIfam" id="TIGR01203">
    <property type="entry name" value="HGPRTase"/>
    <property type="match status" value="1"/>
</dbReference>
<dbReference type="PANTHER" id="PTHR43340:SF1">
    <property type="entry name" value="HYPOXANTHINE PHOSPHORIBOSYLTRANSFERASE"/>
    <property type="match status" value="1"/>
</dbReference>
<dbReference type="PANTHER" id="PTHR43340">
    <property type="entry name" value="HYPOXANTHINE-GUANINE PHOSPHORIBOSYLTRANSFERASE"/>
    <property type="match status" value="1"/>
</dbReference>
<dbReference type="Pfam" id="PF00156">
    <property type="entry name" value="Pribosyltran"/>
    <property type="match status" value="1"/>
</dbReference>
<dbReference type="SUPFAM" id="SSF53271">
    <property type="entry name" value="PRTase-like"/>
    <property type="match status" value="1"/>
</dbReference>
<feature type="chain" id="PRO_0000139622" description="Hypoxanthine-guanine phosphoribosyltransferase">
    <location>
        <begin position="1"/>
        <end position="180"/>
    </location>
</feature>
<feature type="active site" description="Proton acceptor" evidence="2">
    <location>
        <position position="103"/>
    </location>
</feature>
<feature type="binding site" evidence="3">
    <location>
        <position position="43"/>
    </location>
    <ligand>
        <name>diphosphate</name>
        <dbReference type="ChEBI" id="CHEBI:33019"/>
    </ligand>
</feature>
<feature type="binding site" evidence="3">
    <location>
        <position position="44"/>
    </location>
    <ligand>
        <name>diphosphate</name>
        <dbReference type="ChEBI" id="CHEBI:33019"/>
    </ligand>
</feature>
<feature type="binding site" evidence="3">
    <location>
        <position position="99"/>
    </location>
    <ligand>
        <name>Mg(2+)</name>
        <dbReference type="ChEBI" id="CHEBI:18420"/>
    </ligand>
</feature>
<feature type="binding site" evidence="3">
    <location>
        <position position="100"/>
    </location>
    <ligand>
        <name>Mg(2+)</name>
        <dbReference type="ChEBI" id="CHEBI:18420"/>
    </ligand>
</feature>
<feature type="binding site" evidence="3">
    <location>
        <position position="131"/>
    </location>
    <ligand>
        <name>GMP</name>
        <dbReference type="ChEBI" id="CHEBI:58115"/>
    </ligand>
</feature>
<feature type="binding site" evidence="3">
    <location>
        <begin position="152"/>
        <end position="153"/>
    </location>
    <ligand>
        <name>GMP</name>
        <dbReference type="ChEBI" id="CHEBI:58115"/>
    </ligand>
</feature>
<feature type="binding site" evidence="3">
    <location>
        <position position="159"/>
    </location>
    <ligand>
        <name>GMP</name>
        <dbReference type="ChEBI" id="CHEBI:58115"/>
    </ligand>
</feature>
<feature type="binding site" evidence="3">
    <location>
        <position position="165"/>
    </location>
    <ligand>
        <name>diphosphate</name>
        <dbReference type="ChEBI" id="CHEBI:33019"/>
    </ligand>
</feature>
<accession>Q8DWM8</accession>
<organism>
    <name type="scientific">Streptococcus mutans serotype c (strain ATCC 700610 / UA159)</name>
    <dbReference type="NCBI Taxonomy" id="210007"/>
    <lineage>
        <taxon>Bacteria</taxon>
        <taxon>Bacillati</taxon>
        <taxon>Bacillota</taxon>
        <taxon>Bacilli</taxon>
        <taxon>Lactobacillales</taxon>
        <taxon>Streptococcaceae</taxon>
        <taxon>Streptococcus</taxon>
    </lineage>
</organism>
<name>HGPRT_STRMU</name>